<dbReference type="EC" id="3.6.1.1" evidence="1"/>
<dbReference type="EMBL" id="CP001407">
    <property type="protein sequence ID" value="ACO28058.1"/>
    <property type="molecule type" value="Genomic_DNA"/>
</dbReference>
<dbReference type="RefSeq" id="WP_000700956.1">
    <property type="nucleotide sequence ID" value="NZ_CP009318.1"/>
</dbReference>
<dbReference type="SMR" id="C1EZE2"/>
<dbReference type="KEGG" id="bcx:BCA_5289"/>
<dbReference type="PATRIC" id="fig|572264.18.peg.5212"/>
<dbReference type="Proteomes" id="UP000002210">
    <property type="component" value="Chromosome"/>
</dbReference>
<dbReference type="GO" id="GO:0005829">
    <property type="term" value="C:cytosol"/>
    <property type="evidence" value="ECO:0007669"/>
    <property type="project" value="TreeGrafter"/>
</dbReference>
<dbReference type="GO" id="GO:0004427">
    <property type="term" value="F:inorganic diphosphate phosphatase activity"/>
    <property type="evidence" value="ECO:0007669"/>
    <property type="project" value="UniProtKB-UniRule"/>
</dbReference>
<dbReference type="GO" id="GO:0000287">
    <property type="term" value="F:magnesium ion binding"/>
    <property type="evidence" value="ECO:0007669"/>
    <property type="project" value="UniProtKB-UniRule"/>
</dbReference>
<dbReference type="GO" id="GO:0008967">
    <property type="term" value="F:phosphoglycolate phosphatase activity"/>
    <property type="evidence" value="ECO:0007669"/>
    <property type="project" value="TreeGrafter"/>
</dbReference>
<dbReference type="GO" id="GO:0006281">
    <property type="term" value="P:DNA repair"/>
    <property type="evidence" value="ECO:0007669"/>
    <property type="project" value="TreeGrafter"/>
</dbReference>
<dbReference type="CDD" id="cd02616">
    <property type="entry name" value="HAD_PPase"/>
    <property type="match status" value="1"/>
</dbReference>
<dbReference type="FunFam" id="3.40.50.1000:FF:000022">
    <property type="entry name" value="Phosphoglycolate phosphatase"/>
    <property type="match status" value="1"/>
</dbReference>
<dbReference type="FunFam" id="1.10.150.240:FF:000008">
    <property type="entry name" value="Pyrophosphatase PpaX"/>
    <property type="match status" value="1"/>
</dbReference>
<dbReference type="Gene3D" id="3.40.50.1000">
    <property type="entry name" value="HAD superfamily/HAD-like"/>
    <property type="match status" value="1"/>
</dbReference>
<dbReference type="Gene3D" id="1.10.150.240">
    <property type="entry name" value="Putative phosphatase, domain 2"/>
    <property type="match status" value="1"/>
</dbReference>
<dbReference type="HAMAP" id="MF_01250">
    <property type="entry name" value="Pyrophosphat_PpaX"/>
    <property type="match status" value="1"/>
</dbReference>
<dbReference type="InterPro" id="IPR050155">
    <property type="entry name" value="HAD-like_hydrolase_sf"/>
</dbReference>
<dbReference type="InterPro" id="IPR036412">
    <property type="entry name" value="HAD-like_sf"/>
</dbReference>
<dbReference type="InterPro" id="IPR006439">
    <property type="entry name" value="HAD-SF_hydro_IA"/>
</dbReference>
<dbReference type="InterPro" id="IPR006549">
    <property type="entry name" value="HAD-SF_hydro_IIIA"/>
</dbReference>
<dbReference type="InterPro" id="IPR041492">
    <property type="entry name" value="HAD_2"/>
</dbReference>
<dbReference type="InterPro" id="IPR023214">
    <property type="entry name" value="HAD_sf"/>
</dbReference>
<dbReference type="InterPro" id="IPR023198">
    <property type="entry name" value="PGP-like_dom2"/>
</dbReference>
<dbReference type="InterPro" id="IPR023733">
    <property type="entry name" value="Pyrophosphatase_Ppax"/>
</dbReference>
<dbReference type="NCBIfam" id="TIGR01549">
    <property type="entry name" value="HAD-SF-IA-v1"/>
    <property type="match status" value="1"/>
</dbReference>
<dbReference type="NCBIfam" id="TIGR01509">
    <property type="entry name" value="HAD-SF-IA-v3"/>
    <property type="match status" value="1"/>
</dbReference>
<dbReference type="NCBIfam" id="TIGR01662">
    <property type="entry name" value="HAD-SF-IIIA"/>
    <property type="match status" value="1"/>
</dbReference>
<dbReference type="NCBIfam" id="NF009804">
    <property type="entry name" value="PRK13288.1"/>
    <property type="match status" value="1"/>
</dbReference>
<dbReference type="PANTHER" id="PTHR43434">
    <property type="entry name" value="PHOSPHOGLYCOLATE PHOSPHATASE"/>
    <property type="match status" value="1"/>
</dbReference>
<dbReference type="PANTHER" id="PTHR43434:SF26">
    <property type="entry name" value="PYROPHOSPHATASE PPAX"/>
    <property type="match status" value="1"/>
</dbReference>
<dbReference type="Pfam" id="PF13419">
    <property type="entry name" value="HAD_2"/>
    <property type="match status" value="1"/>
</dbReference>
<dbReference type="PRINTS" id="PR00413">
    <property type="entry name" value="HADHALOGNASE"/>
</dbReference>
<dbReference type="SFLD" id="SFLDG01135">
    <property type="entry name" value="C1.5.6:_HAD__Beta-PGM__Phospha"/>
    <property type="match status" value="1"/>
</dbReference>
<dbReference type="SFLD" id="SFLDG01129">
    <property type="entry name" value="C1.5:_HAD__Beta-PGM__Phosphata"/>
    <property type="match status" value="1"/>
</dbReference>
<dbReference type="SUPFAM" id="SSF56784">
    <property type="entry name" value="HAD-like"/>
    <property type="match status" value="1"/>
</dbReference>
<evidence type="ECO:0000255" key="1">
    <source>
        <dbReference type="HAMAP-Rule" id="MF_01250"/>
    </source>
</evidence>
<keyword id="KW-0378">Hydrolase</keyword>
<keyword id="KW-0460">Magnesium</keyword>
<proteinExistence type="inferred from homology"/>
<sequence length="216" mass="24721">MKINTVLFDLDGTLINTNELIISSFLHTLHTYYPNQYKREDVLPFIGPSLHDTFSKIDESKVEELITSYRQFNHDHHDELVEEYETVYETVQELKKQGYKVGIVTTKARQTVEMGLKLSKLDEFFDVVVTIDDVEHVKPHPEPLQKALQLLDAKPEEALMVGDNHHDIVGGQNAGTKTAAVSWTLKGRAYLEAYKPDFMLDKMSDLLPILSDMNRS</sequence>
<name>PPAX_BACC3</name>
<gene>
    <name evidence="1" type="primary">ppaX</name>
    <name type="ordered locus">BCA_5289</name>
</gene>
<accession>C1EZE2</accession>
<reference key="1">
    <citation type="submission" date="2009-02" db="EMBL/GenBank/DDBJ databases">
        <title>Genome sequence of Bacillus cereus 03BB102.</title>
        <authorList>
            <person name="Dodson R.J."/>
            <person name="Jackson P."/>
            <person name="Munk A.C."/>
            <person name="Brettin T."/>
            <person name="Bruce D."/>
            <person name="Detter C."/>
            <person name="Tapia R."/>
            <person name="Han C."/>
            <person name="Sutton G."/>
            <person name="Sims D."/>
        </authorList>
    </citation>
    <scope>NUCLEOTIDE SEQUENCE [LARGE SCALE GENOMIC DNA]</scope>
    <source>
        <strain>03BB102</strain>
    </source>
</reference>
<feature type="chain" id="PRO_1000165084" description="Pyrophosphatase PpaX">
    <location>
        <begin position="1"/>
        <end position="216"/>
    </location>
</feature>
<feature type="active site" description="Nucleophile" evidence="1">
    <location>
        <position position="9"/>
    </location>
</feature>
<comment type="function">
    <text evidence="1">Hydrolyzes pyrophosphate formed during P-Ser-HPr dephosphorylation by HPrK/P. Might play a role in controlling the intracellular pyrophosphate pool.</text>
</comment>
<comment type="catalytic activity">
    <reaction evidence="1">
        <text>diphosphate + H2O = 2 phosphate + H(+)</text>
        <dbReference type="Rhea" id="RHEA:24576"/>
        <dbReference type="ChEBI" id="CHEBI:15377"/>
        <dbReference type="ChEBI" id="CHEBI:15378"/>
        <dbReference type="ChEBI" id="CHEBI:33019"/>
        <dbReference type="ChEBI" id="CHEBI:43474"/>
        <dbReference type="EC" id="3.6.1.1"/>
    </reaction>
</comment>
<comment type="cofactor">
    <cofactor evidence="1">
        <name>Mg(2+)</name>
        <dbReference type="ChEBI" id="CHEBI:18420"/>
    </cofactor>
</comment>
<comment type="similarity">
    <text evidence="1">Belongs to the HAD-like hydrolase superfamily. PpaX family.</text>
</comment>
<protein>
    <recommendedName>
        <fullName evidence="1">Pyrophosphatase PpaX</fullName>
        <ecNumber evidence="1">3.6.1.1</ecNumber>
    </recommendedName>
</protein>
<organism>
    <name type="scientific">Bacillus cereus (strain 03BB102)</name>
    <dbReference type="NCBI Taxonomy" id="572264"/>
    <lineage>
        <taxon>Bacteria</taxon>
        <taxon>Bacillati</taxon>
        <taxon>Bacillota</taxon>
        <taxon>Bacilli</taxon>
        <taxon>Bacillales</taxon>
        <taxon>Bacillaceae</taxon>
        <taxon>Bacillus</taxon>
        <taxon>Bacillus cereus group</taxon>
    </lineage>
</organism>